<accession>Q0HN88</accession>
<protein>
    <recommendedName>
        <fullName evidence="1">DNA-binding protein Fis</fullName>
    </recommendedName>
</protein>
<evidence type="ECO:0000255" key="1">
    <source>
        <dbReference type="HAMAP-Rule" id="MF_00166"/>
    </source>
</evidence>
<organism>
    <name type="scientific">Shewanella sp. (strain MR-4)</name>
    <dbReference type="NCBI Taxonomy" id="60480"/>
    <lineage>
        <taxon>Bacteria</taxon>
        <taxon>Pseudomonadati</taxon>
        <taxon>Pseudomonadota</taxon>
        <taxon>Gammaproteobacteria</taxon>
        <taxon>Alteromonadales</taxon>
        <taxon>Shewanellaceae</taxon>
        <taxon>Shewanella</taxon>
    </lineage>
</organism>
<proteinExistence type="inferred from homology"/>
<keyword id="KW-0010">Activator</keyword>
<keyword id="KW-0238">DNA-binding</keyword>
<keyword id="KW-0804">Transcription</keyword>
<keyword id="KW-0805">Transcription regulation</keyword>
<sequence length="101" mass="11390">MFDQTTNTEVHQLTVGKIETANGTIKPQLLRDAVKRAVTNFFAQLDGQEAQEVYEMVLSEVEAPLLDIIMQHTRGNQTRAANMLGINRGTLRKKLKKYGMN</sequence>
<feature type="chain" id="PRO_1000023342" description="DNA-binding protein Fis">
    <location>
        <begin position="1"/>
        <end position="101"/>
    </location>
</feature>
<feature type="DNA-binding region" description="H-T-H motif" evidence="1">
    <location>
        <begin position="77"/>
        <end position="96"/>
    </location>
</feature>
<comment type="function">
    <text evidence="1">Activates ribosomal RNA transcription. Plays a direct role in upstream activation of rRNA promoters.</text>
</comment>
<comment type="subunit">
    <text evidence="1">Homodimer.</text>
</comment>
<comment type="similarity">
    <text evidence="1">Belongs to the transcriptional regulatory Fis family.</text>
</comment>
<name>FIS_SHESM</name>
<reference key="1">
    <citation type="submission" date="2006-08" db="EMBL/GenBank/DDBJ databases">
        <title>Complete sequence of Shewanella sp. MR-4.</title>
        <authorList>
            <consortium name="US DOE Joint Genome Institute"/>
            <person name="Copeland A."/>
            <person name="Lucas S."/>
            <person name="Lapidus A."/>
            <person name="Barry K."/>
            <person name="Detter J.C."/>
            <person name="Glavina del Rio T."/>
            <person name="Hammon N."/>
            <person name="Israni S."/>
            <person name="Dalin E."/>
            <person name="Tice H."/>
            <person name="Pitluck S."/>
            <person name="Kiss H."/>
            <person name="Brettin T."/>
            <person name="Bruce D."/>
            <person name="Han C."/>
            <person name="Tapia R."/>
            <person name="Gilna P."/>
            <person name="Schmutz J."/>
            <person name="Larimer F."/>
            <person name="Land M."/>
            <person name="Hauser L."/>
            <person name="Kyrpides N."/>
            <person name="Mikhailova N."/>
            <person name="Nealson K."/>
            <person name="Konstantinidis K."/>
            <person name="Klappenbach J."/>
            <person name="Tiedje J."/>
            <person name="Richardson P."/>
        </authorList>
    </citation>
    <scope>NUCLEOTIDE SEQUENCE [LARGE SCALE GENOMIC DNA]</scope>
    <source>
        <strain>MR-4</strain>
    </source>
</reference>
<dbReference type="EMBL" id="CP000446">
    <property type="protein sequence ID" value="ABI37479.1"/>
    <property type="molecule type" value="Genomic_DNA"/>
</dbReference>
<dbReference type="RefSeq" id="WP_006083371.1">
    <property type="nucleotide sequence ID" value="NC_008321.1"/>
</dbReference>
<dbReference type="SMR" id="Q0HN88"/>
<dbReference type="GeneID" id="94726394"/>
<dbReference type="KEGG" id="she:Shewmr4_0399"/>
<dbReference type="HOGENOM" id="CLU_158040_3_3_6"/>
<dbReference type="GO" id="GO:0003700">
    <property type="term" value="F:DNA-binding transcription factor activity"/>
    <property type="evidence" value="ECO:0007669"/>
    <property type="project" value="UniProtKB-UniRule"/>
</dbReference>
<dbReference type="GO" id="GO:0043565">
    <property type="term" value="F:sequence-specific DNA binding"/>
    <property type="evidence" value="ECO:0007669"/>
    <property type="project" value="InterPro"/>
</dbReference>
<dbReference type="FunFam" id="1.10.10.60:FF:000006">
    <property type="entry name" value="DNA-binding protein Fis"/>
    <property type="match status" value="1"/>
</dbReference>
<dbReference type="Gene3D" id="1.10.10.60">
    <property type="entry name" value="Homeodomain-like"/>
    <property type="match status" value="1"/>
</dbReference>
<dbReference type="HAMAP" id="MF_00166">
    <property type="entry name" value="DNA_binding_Fis"/>
    <property type="match status" value="1"/>
</dbReference>
<dbReference type="InterPro" id="IPR005412">
    <property type="entry name" value="Fis_DNA-bd"/>
</dbReference>
<dbReference type="InterPro" id="IPR009057">
    <property type="entry name" value="Homeodomain-like_sf"/>
</dbReference>
<dbReference type="InterPro" id="IPR002197">
    <property type="entry name" value="HTH_Fis"/>
</dbReference>
<dbReference type="InterPro" id="IPR050207">
    <property type="entry name" value="Trans_regulatory_Fis"/>
</dbReference>
<dbReference type="NCBIfam" id="NF001659">
    <property type="entry name" value="PRK00430.1"/>
    <property type="match status" value="1"/>
</dbReference>
<dbReference type="PANTHER" id="PTHR47918">
    <property type="entry name" value="DNA-BINDING PROTEIN FIS"/>
    <property type="match status" value="1"/>
</dbReference>
<dbReference type="PANTHER" id="PTHR47918:SF1">
    <property type="entry name" value="DNA-BINDING PROTEIN FIS"/>
    <property type="match status" value="1"/>
</dbReference>
<dbReference type="Pfam" id="PF02954">
    <property type="entry name" value="HTH_8"/>
    <property type="match status" value="1"/>
</dbReference>
<dbReference type="PIRSF" id="PIRSF002097">
    <property type="entry name" value="DNA-binding_Fis"/>
    <property type="match status" value="1"/>
</dbReference>
<dbReference type="PRINTS" id="PR01591">
    <property type="entry name" value="DNABINDNGFIS"/>
</dbReference>
<dbReference type="PRINTS" id="PR01590">
    <property type="entry name" value="HTHFIS"/>
</dbReference>
<dbReference type="SUPFAM" id="SSF46689">
    <property type="entry name" value="Homeodomain-like"/>
    <property type="match status" value="1"/>
</dbReference>
<gene>
    <name evidence="1" type="primary">fis</name>
    <name type="ordered locus">Shewmr4_0399</name>
</gene>